<organism>
    <name type="scientific">Methanosarcina mazei (strain ATCC BAA-159 / DSM 3647 / Goe1 / Go1 / JCM 11833 / OCM 88)</name>
    <name type="common">Methanosarcina frisia</name>
    <dbReference type="NCBI Taxonomy" id="192952"/>
    <lineage>
        <taxon>Archaea</taxon>
        <taxon>Methanobacteriati</taxon>
        <taxon>Methanobacteriota</taxon>
        <taxon>Stenosarchaea group</taxon>
        <taxon>Methanomicrobia</taxon>
        <taxon>Methanosarcinales</taxon>
        <taxon>Methanosarcinaceae</taxon>
        <taxon>Methanosarcina</taxon>
    </lineage>
</organism>
<feature type="chain" id="PRO_0000142495" description="Translation initiation factor 5A">
    <location>
        <begin position="1"/>
        <end position="128"/>
    </location>
</feature>
<feature type="modified residue" description="Hypusine" evidence="1">
    <location>
        <position position="35"/>
    </location>
</feature>
<sequence>MKQQVEVKELKEGKYVIIDDEACVIKSITKSKPGKHGAAKARVEAIGLFDGQKRSYIGSVANKVYVPIVERKSAQVISITGDIAQLMDMGDFSTFEIVIPDELKDRVKEGEEVSYITALGKVKLDIRT</sequence>
<gene>
    <name type="primary">eif5a</name>
    <name type="ordered locus">MM_0922</name>
</gene>
<name>IF5A_METMA</name>
<keyword id="KW-0963">Cytoplasm</keyword>
<keyword id="KW-0385">Hypusine</keyword>
<keyword id="KW-0396">Initiation factor</keyword>
<keyword id="KW-0648">Protein biosynthesis</keyword>
<proteinExistence type="inferred from homology"/>
<comment type="function">
    <text evidence="1">Functions by promoting the formation of the first peptide bond.</text>
</comment>
<comment type="subcellular location">
    <subcellularLocation>
        <location evidence="1">Cytoplasm</location>
    </subcellularLocation>
</comment>
<comment type="similarity">
    <text evidence="2">Belongs to the eIF-5A family.</text>
</comment>
<evidence type="ECO:0000250" key="1"/>
<evidence type="ECO:0000305" key="2"/>
<protein>
    <recommendedName>
        <fullName>Translation initiation factor 5A</fullName>
    </recommendedName>
    <alternativeName>
        <fullName>Hypusine-containing protein</fullName>
    </alternativeName>
    <alternativeName>
        <fullName>eIF-5A</fullName>
    </alternativeName>
</protein>
<dbReference type="EMBL" id="AE008384">
    <property type="protein sequence ID" value="AAM30618.1"/>
    <property type="molecule type" value="Genomic_DNA"/>
</dbReference>
<dbReference type="RefSeq" id="WP_011032872.1">
    <property type="nucleotide sequence ID" value="NC_003901.1"/>
</dbReference>
<dbReference type="SMR" id="Q8PYE0"/>
<dbReference type="KEGG" id="mma:MM_0922"/>
<dbReference type="PATRIC" id="fig|192952.21.peg.1085"/>
<dbReference type="eggNOG" id="arCOG04277">
    <property type="taxonomic scope" value="Archaea"/>
</dbReference>
<dbReference type="HOGENOM" id="CLU_102600_3_0_2"/>
<dbReference type="Proteomes" id="UP000000595">
    <property type="component" value="Chromosome"/>
</dbReference>
<dbReference type="GO" id="GO:0005737">
    <property type="term" value="C:cytoplasm"/>
    <property type="evidence" value="ECO:0007669"/>
    <property type="project" value="UniProtKB-SubCell"/>
</dbReference>
<dbReference type="GO" id="GO:0043022">
    <property type="term" value="F:ribosome binding"/>
    <property type="evidence" value="ECO:0007669"/>
    <property type="project" value="InterPro"/>
</dbReference>
<dbReference type="GO" id="GO:0003723">
    <property type="term" value="F:RNA binding"/>
    <property type="evidence" value="ECO:0007669"/>
    <property type="project" value="InterPro"/>
</dbReference>
<dbReference type="GO" id="GO:0003746">
    <property type="term" value="F:translation elongation factor activity"/>
    <property type="evidence" value="ECO:0007669"/>
    <property type="project" value="InterPro"/>
</dbReference>
<dbReference type="GO" id="GO:0003743">
    <property type="term" value="F:translation initiation factor activity"/>
    <property type="evidence" value="ECO:0007669"/>
    <property type="project" value="UniProtKB-UniRule"/>
</dbReference>
<dbReference type="GO" id="GO:0045901">
    <property type="term" value="P:positive regulation of translational elongation"/>
    <property type="evidence" value="ECO:0007669"/>
    <property type="project" value="InterPro"/>
</dbReference>
<dbReference type="GO" id="GO:0045905">
    <property type="term" value="P:positive regulation of translational termination"/>
    <property type="evidence" value="ECO:0007669"/>
    <property type="project" value="InterPro"/>
</dbReference>
<dbReference type="CDD" id="cd04467">
    <property type="entry name" value="S1_aIF5A"/>
    <property type="match status" value="1"/>
</dbReference>
<dbReference type="FunFam" id="2.30.30.30:FF:000038">
    <property type="entry name" value="Translation initiation factor 5A"/>
    <property type="match status" value="1"/>
</dbReference>
<dbReference type="FunFam" id="2.40.50.140:FF:000447">
    <property type="entry name" value="Translation initiation factor 5A"/>
    <property type="match status" value="1"/>
</dbReference>
<dbReference type="Gene3D" id="2.30.30.30">
    <property type="match status" value="1"/>
</dbReference>
<dbReference type="Gene3D" id="2.40.50.140">
    <property type="entry name" value="Nucleic acid-binding proteins"/>
    <property type="match status" value="1"/>
</dbReference>
<dbReference type="HAMAP" id="MF_00085">
    <property type="entry name" value="eIF_5A"/>
    <property type="match status" value="1"/>
</dbReference>
<dbReference type="InterPro" id="IPR001884">
    <property type="entry name" value="IF5A-like"/>
</dbReference>
<dbReference type="InterPro" id="IPR048670">
    <property type="entry name" value="IF5A-like_N"/>
</dbReference>
<dbReference type="InterPro" id="IPR012340">
    <property type="entry name" value="NA-bd_OB-fold"/>
</dbReference>
<dbReference type="InterPro" id="IPR014722">
    <property type="entry name" value="Rib_uL2_dom2"/>
</dbReference>
<dbReference type="InterPro" id="IPR019769">
    <property type="entry name" value="Trans_elong_IF5A_hypusine_site"/>
</dbReference>
<dbReference type="InterPro" id="IPR022847">
    <property type="entry name" value="Transl_elong_IF5A_arc"/>
</dbReference>
<dbReference type="InterPro" id="IPR020189">
    <property type="entry name" value="Transl_elong_IF5A_C"/>
</dbReference>
<dbReference type="InterPro" id="IPR008991">
    <property type="entry name" value="Translation_prot_SH3-like_sf"/>
</dbReference>
<dbReference type="NCBIfam" id="TIGR00037">
    <property type="entry name" value="eIF_5A"/>
    <property type="match status" value="1"/>
</dbReference>
<dbReference type="NCBIfam" id="NF003076">
    <property type="entry name" value="PRK03999.1"/>
    <property type="match status" value="1"/>
</dbReference>
<dbReference type="PANTHER" id="PTHR11673">
    <property type="entry name" value="TRANSLATION INITIATION FACTOR 5A FAMILY MEMBER"/>
    <property type="match status" value="1"/>
</dbReference>
<dbReference type="Pfam" id="PF01287">
    <property type="entry name" value="eIF-5a"/>
    <property type="match status" value="1"/>
</dbReference>
<dbReference type="Pfam" id="PF21485">
    <property type="entry name" value="IF5A-like_N"/>
    <property type="match status" value="1"/>
</dbReference>
<dbReference type="PIRSF" id="PIRSF003025">
    <property type="entry name" value="eIF5A"/>
    <property type="match status" value="1"/>
</dbReference>
<dbReference type="SMART" id="SM01376">
    <property type="entry name" value="eIF-5a"/>
    <property type="match status" value="1"/>
</dbReference>
<dbReference type="SUPFAM" id="SSF50249">
    <property type="entry name" value="Nucleic acid-binding proteins"/>
    <property type="match status" value="1"/>
</dbReference>
<dbReference type="SUPFAM" id="SSF50104">
    <property type="entry name" value="Translation proteins SH3-like domain"/>
    <property type="match status" value="1"/>
</dbReference>
<dbReference type="PROSITE" id="PS00302">
    <property type="entry name" value="IF5A_HYPUSINE"/>
    <property type="match status" value="1"/>
</dbReference>
<reference key="1">
    <citation type="journal article" date="2002" name="J. Mol. Microbiol. Biotechnol.">
        <title>The genome of Methanosarcina mazei: evidence for lateral gene transfer between Bacteria and Archaea.</title>
        <authorList>
            <person name="Deppenmeier U."/>
            <person name="Johann A."/>
            <person name="Hartsch T."/>
            <person name="Merkl R."/>
            <person name="Schmitz R.A."/>
            <person name="Martinez-Arias R."/>
            <person name="Henne A."/>
            <person name="Wiezer A."/>
            <person name="Baeumer S."/>
            <person name="Jacobi C."/>
            <person name="Brueggemann H."/>
            <person name="Lienard T."/>
            <person name="Christmann A."/>
            <person name="Boemecke M."/>
            <person name="Steckel S."/>
            <person name="Bhattacharyya A."/>
            <person name="Lykidis A."/>
            <person name="Overbeek R."/>
            <person name="Klenk H.-P."/>
            <person name="Gunsalus R.P."/>
            <person name="Fritz H.-J."/>
            <person name="Gottschalk G."/>
        </authorList>
    </citation>
    <scope>NUCLEOTIDE SEQUENCE [LARGE SCALE GENOMIC DNA]</scope>
    <source>
        <strain>ATCC BAA-159 / DSM 3647 / Goe1 / Go1 / JCM 11833 / OCM 88</strain>
    </source>
</reference>
<accession>Q8PYE0</accession>